<organism>
    <name type="scientific">Mycobacteroides abscessus (strain ATCC 19977 / DSM 44196 / CCUG 20993 / CIP 104536 / JCM 13569 / NCTC 13031 / TMC 1543 / L948)</name>
    <name type="common">Mycobacterium abscessus</name>
    <dbReference type="NCBI Taxonomy" id="561007"/>
    <lineage>
        <taxon>Bacteria</taxon>
        <taxon>Bacillati</taxon>
        <taxon>Actinomycetota</taxon>
        <taxon>Actinomycetes</taxon>
        <taxon>Mycobacteriales</taxon>
        <taxon>Mycobacteriaceae</taxon>
        <taxon>Mycobacteroides</taxon>
        <taxon>Mycobacteroides abscessus</taxon>
    </lineage>
</organism>
<comment type="function">
    <text evidence="1">Binds directly to 23S rRNA. The L1 stalk is quite mobile in the ribosome, and is involved in E site tRNA release.</text>
</comment>
<comment type="function">
    <text evidence="1">Protein L1 is also a translational repressor protein, it controls the translation of the L11 operon by binding to its mRNA.</text>
</comment>
<comment type="subunit">
    <text evidence="1">Part of the 50S ribosomal subunit.</text>
</comment>
<comment type="similarity">
    <text evidence="1">Belongs to the universal ribosomal protein uL1 family.</text>
</comment>
<proteinExistence type="inferred from homology"/>
<protein>
    <recommendedName>
        <fullName evidence="1">Large ribosomal subunit protein uL1</fullName>
    </recommendedName>
    <alternativeName>
        <fullName evidence="2">50S ribosomal protein L1</fullName>
    </alternativeName>
</protein>
<dbReference type="EMBL" id="CU458896">
    <property type="protein sequence ID" value="CAM63966.1"/>
    <property type="molecule type" value="Genomic_DNA"/>
</dbReference>
<dbReference type="RefSeq" id="WP_005061480.1">
    <property type="nucleotide sequence ID" value="NZ_MLCG01000001.1"/>
</dbReference>
<dbReference type="SMR" id="B1MH85"/>
<dbReference type="GeneID" id="93380830"/>
<dbReference type="KEGG" id="mab:MAB_3892c"/>
<dbReference type="Proteomes" id="UP000007137">
    <property type="component" value="Chromosome"/>
</dbReference>
<dbReference type="GO" id="GO:0015934">
    <property type="term" value="C:large ribosomal subunit"/>
    <property type="evidence" value="ECO:0007669"/>
    <property type="project" value="InterPro"/>
</dbReference>
<dbReference type="GO" id="GO:0019843">
    <property type="term" value="F:rRNA binding"/>
    <property type="evidence" value="ECO:0007669"/>
    <property type="project" value="UniProtKB-UniRule"/>
</dbReference>
<dbReference type="GO" id="GO:0003735">
    <property type="term" value="F:structural constituent of ribosome"/>
    <property type="evidence" value="ECO:0007669"/>
    <property type="project" value="InterPro"/>
</dbReference>
<dbReference type="GO" id="GO:0000049">
    <property type="term" value="F:tRNA binding"/>
    <property type="evidence" value="ECO:0007669"/>
    <property type="project" value="UniProtKB-KW"/>
</dbReference>
<dbReference type="GO" id="GO:0006417">
    <property type="term" value="P:regulation of translation"/>
    <property type="evidence" value="ECO:0007669"/>
    <property type="project" value="UniProtKB-KW"/>
</dbReference>
<dbReference type="GO" id="GO:0006412">
    <property type="term" value="P:translation"/>
    <property type="evidence" value="ECO:0007669"/>
    <property type="project" value="UniProtKB-UniRule"/>
</dbReference>
<dbReference type="CDD" id="cd00403">
    <property type="entry name" value="Ribosomal_L1"/>
    <property type="match status" value="1"/>
</dbReference>
<dbReference type="FunFam" id="3.40.50.790:FF:000001">
    <property type="entry name" value="50S ribosomal protein L1"/>
    <property type="match status" value="1"/>
</dbReference>
<dbReference type="Gene3D" id="3.30.190.20">
    <property type="match status" value="1"/>
</dbReference>
<dbReference type="Gene3D" id="3.40.50.790">
    <property type="match status" value="1"/>
</dbReference>
<dbReference type="HAMAP" id="MF_01318_B">
    <property type="entry name" value="Ribosomal_uL1_B"/>
    <property type="match status" value="1"/>
</dbReference>
<dbReference type="InterPro" id="IPR005878">
    <property type="entry name" value="Ribosom_uL1_bac-type"/>
</dbReference>
<dbReference type="InterPro" id="IPR002143">
    <property type="entry name" value="Ribosomal_uL1"/>
</dbReference>
<dbReference type="InterPro" id="IPR023674">
    <property type="entry name" value="Ribosomal_uL1-like"/>
</dbReference>
<dbReference type="InterPro" id="IPR028364">
    <property type="entry name" value="Ribosomal_uL1/biogenesis"/>
</dbReference>
<dbReference type="InterPro" id="IPR016095">
    <property type="entry name" value="Ribosomal_uL1_3-a/b-sand"/>
</dbReference>
<dbReference type="InterPro" id="IPR023673">
    <property type="entry name" value="Ribosomal_uL1_CS"/>
</dbReference>
<dbReference type="NCBIfam" id="TIGR01169">
    <property type="entry name" value="rplA_bact"/>
    <property type="match status" value="1"/>
</dbReference>
<dbReference type="PANTHER" id="PTHR36427">
    <property type="entry name" value="54S RIBOSOMAL PROTEIN L1, MITOCHONDRIAL"/>
    <property type="match status" value="1"/>
</dbReference>
<dbReference type="PANTHER" id="PTHR36427:SF3">
    <property type="entry name" value="LARGE RIBOSOMAL SUBUNIT PROTEIN UL1M"/>
    <property type="match status" value="1"/>
</dbReference>
<dbReference type="Pfam" id="PF00687">
    <property type="entry name" value="Ribosomal_L1"/>
    <property type="match status" value="1"/>
</dbReference>
<dbReference type="PIRSF" id="PIRSF002155">
    <property type="entry name" value="Ribosomal_L1"/>
    <property type="match status" value="1"/>
</dbReference>
<dbReference type="SUPFAM" id="SSF56808">
    <property type="entry name" value="Ribosomal protein L1"/>
    <property type="match status" value="1"/>
</dbReference>
<dbReference type="PROSITE" id="PS01199">
    <property type="entry name" value="RIBOSOMAL_L1"/>
    <property type="match status" value="1"/>
</dbReference>
<reference key="1">
    <citation type="journal article" date="2009" name="PLoS ONE">
        <title>Non mycobacterial virulence genes in the genome of the emerging pathogen Mycobacterium abscessus.</title>
        <authorList>
            <person name="Ripoll F."/>
            <person name="Pasek S."/>
            <person name="Schenowitz C."/>
            <person name="Dossat C."/>
            <person name="Barbe V."/>
            <person name="Rottman M."/>
            <person name="Macheras E."/>
            <person name="Heym B."/>
            <person name="Herrmann J.L."/>
            <person name="Daffe M."/>
            <person name="Brosch R."/>
            <person name="Risler J.L."/>
            <person name="Gaillard J.L."/>
        </authorList>
    </citation>
    <scope>NUCLEOTIDE SEQUENCE [LARGE SCALE GENOMIC DNA]</scope>
    <source>
        <strain>ATCC 19977 / DSM 44196 / CCUG 20993 / CIP 104536 / JCM 13569 / NCTC 13031 / TMC 1543 / L948</strain>
    </source>
</reference>
<sequence>MSKNSKAYREAAEKVDREKLYTPLEATKLAKETSSKKYDATVEVAMRLGVDPRKADQMVRGTVNLPHGTGKTARVIVFAVGDKAEAAAAAGADVVGSDDLIERIQGGWVDFDAAIATPDQMAKVGRIARVLGPRGLMPNPKTGTVTPDVAKAVTDIKGGKINFRVDKHSNLHLIIGKASFDAEKLTENYGAVLDEILRAKPSSAKGRYLKKVVVSTTTGPGIQVDPGVTRNFLEA</sequence>
<gene>
    <name evidence="1" type="primary">rplA</name>
    <name type="ordered locus">MAB_3892c</name>
</gene>
<evidence type="ECO:0000255" key="1">
    <source>
        <dbReference type="HAMAP-Rule" id="MF_01318"/>
    </source>
</evidence>
<evidence type="ECO:0000305" key="2"/>
<accession>B1MH85</accession>
<name>RL1_MYCA9</name>
<keyword id="KW-1185">Reference proteome</keyword>
<keyword id="KW-0678">Repressor</keyword>
<keyword id="KW-0687">Ribonucleoprotein</keyword>
<keyword id="KW-0689">Ribosomal protein</keyword>
<keyword id="KW-0694">RNA-binding</keyword>
<keyword id="KW-0699">rRNA-binding</keyword>
<keyword id="KW-0810">Translation regulation</keyword>
<keyword id="KW-0820">tRNA-binding</keyword>
<feature type="chain" id="PRO_1000141433" description="Large ribosomal subunit protein uL1">
    <location>
        <begin position="1"/>
        <end position="235"/>
    </location>
</feature>